<sequence length="61" mass="6513">MGRADTPRHPPPPAAGFGVHRGAFLIPVALRVLLAGRTPRPFTPGLADPRRLGPRRVQAAQ</sequence>
<protein>
    <recommendedName>
        <fullName evidence="3">Putative uncharacterized protein URB1-AS1</fullName>
    </recommendedName>
    <alternativeName>
        <fullName evidence="3">URB1 antisense RNA 1</fullName>
    </alternativeName>
    <alternativeName>
        <fullName evidence="2">URB1 antisense gene protein 1</fullName>
    </alternativeName>
</protein>
<evidence type="ECO:0000256" key="1">
    <source>
        <dbReference type="SAM" id="MobiDB-lite"/>
    </source>
</evidence>
<evidence type="ECO:0000305" key="2"/>
<evidence type="ECO:0000312" key="3">
    <source>
        <dbReference type="HGNC" id="HGNC:23128"/>
    </source>
</evidence>
<feature type="chain" id="PRO_0000079549" description="Putative uncharacterized protein URB1-AS1">
    <location>
        <begin position="1"/>
        <end position="61"/>
    </location>
</feature>
<feature type="region of interest" description="Disordered" evidence="1">
    <location>
        <begin position="38"/>
        <end position="61"/>
    </location>
</feature>
<reference key="1">
    <citation type="journal article" date="2000" name="Nature">
        <title>The DNA sequence of human chromosome 21.</title>
        <authorList>
            <person name="Hattori M."/>
            <person name="Fujiyama A."/>
            <person name="Taylor T.D."/>
            <person name="Watanabe H."/>
            <person name="Yada T."/>
            <person name="Park H.-S."/>
            <person name="Toyoda A."/>
            <person name="Ishii K."/>
            <person name="Totoki Y."/>
            <person name="Choi D.-K."/>
            <person name="Groner Y."/>
            <person name="Soeda E."/>
            <person name="Ohki M."/>
            <person name="Takagi T."/>
            <person name="Sakaki Y."/>
            <person name="Taudien S."/>
            <person name="Blechschmidt K."/>
            <person name="Polley A."/>
            <person name="Menzel U."/>
            <person name="Delabar J."/>
            <person name="Kumpf K."/>
            <person name="Lehmann R."/>
            <person name="Patterson D."/>
            <person name="Reichwald K."/>
            <person name="Rump A."/>
            <person name="Schillhabel M."/>
            <person name="Schudy A."/>
            <person name="Zimmermann W."/>
            <person name="Rosenthal A."/>
            <person name="Kudoh J."/>
            <person name="Shibuya K."/>
            <person name="Kawasaki K."/>
            <person name="Asakawa S."/>
            <person name="Shintani A."/>
            <person name="Sasaki T."/>
            <person name="Nagamine K."/>
            <person name="Mitsuyama S."/>
            <person name="Antonarakis S.E."/>
            <person name="Minoshima S."/>
            <person name="Shimizu N."/>
            <person name="Nordsiek G."/>
            <person name="Hornischer K."/>
            <person name="Brandt P."/>
            <person name="Scharfe M."/>
            <person name="Schoen O."/>
            <person name="Desario A."/>
            <person name="Reichelt J."/>
            <person name="Kauer G."/>
            <person name="Bloecker H."/>
            <person name="Ramser J."/>
            <person name="Beck A."/>
            <person name="Klages S."/>
            <person name="Hennig S."/>
            <person name="Riesselmann L."/>
            <person name="Dagand E."/>
            <person name="Wehrmeyer S."/>
            <person name="Borzym K."/>
            <person name="Gardiner K."/>
            <person name="Nizetic D."/>
            <person name="Francis F."/>
            <person name="Lehrach H."/>
            <person name="Reinhardt R."/>
            <person name="Yaspo M.-L."/>
        </authorList>
    </citation>
    <scope>NUCLEOTIDE SEQUENCE [LARGE SCALE GENOMIC DNA]</scope>
</reference>
<reference key="2">
    <citation type="journal article" date="2004" name="Genome Res.">
        <title>The status, quality, and expansion of the NIH full-length cDNA project: the Mammalian Gene Collection (MGC).</title>
        <authorList>
            <consortium name="The MGC Project Team"/>
        </authorList>
    </citation>
    <scope>NUCLEOTIDE SEQUENCE [LARGE SCALE MRNA]</scope>
    <source>
        <tissue>Lung carcinoma</tissue>
    </source>
</reference>
<accession>Q96HZ7</accession>
<keyword id="KW-1185">Reference proteome</keyword>
<gene>
    <name evidence="3" type="primary">URB1-AS1</name>
    <name evidence="3" type="synonym">C21orf119</name>
    <name evidence="3" type="ORF">PRED84</name>
</gene>
<proteinExistence type="uncertain"/>
<name>URAS1_HUMAN</name>
<organism>
    <name type="scientific">Homo sapiens</name>
    <name type="common">Human</name>
    <dbReference type="NCBI Taxonomy" id="9606"/>
    <lineage>
        <taxon>Eukaryota</taxon>
        <taxon>Metazoa</taxon>
        <taxon>Chordata</taxon>
        <taxon>Craniata</taxon>
        <taxon>Vertebrata</taxon>
        <taxon>Euteleostomi</taxon>
        <taxon>Mammalia</taxon>
        <taxon>Eutheria</taxon>
        <taxon>Euarchontoglires</taxon>
        <taxon>Primates</taxon>
        <taxon>Haplorrhini</taxon>
        <taxon>Catarrhini</taxon>
        <taxon>Hominidae</taxon>
        <taxon>Homo</taxon>
    </lineage>
</organism>
<comment type="interaction">
    <interactant intactId="EBI-10288943">
        <id>Q96HZ7</id>
    </interactant>
    <interactant intactId="EBI-10175124">
        <id>Q8IZU0</id>
        <label>FAM9B</label>
    </interactant>
    <organismsDiffer>false</organismsDiffer>
    <experiments>3</experiments>
</comment>
<comment type="interaction">
    <interactant intactId="EBI-10288943">
        <id>Q96HZ7</id>
    </interactant>
    <interactant intactId="EBI-302345">
        <id>Q8ND90</id>
        <label>PNMA1</label>
    </interactant>
    <organismsDiffer>false</organismsDiffer>
    <experiments>3</experiments>
</comment>
<comment type="interaction">
    <interactant intactId="EBI-10288943">
        <id>Q96HZ7</id>
    </interactant>
    <interactant intactId="EBI-348380">
        <id>P25788</id>
        <label>PSMA3</label>
    </interactant>
    <organismsDiffer>false</organismsDiffer>
    <experiments>3</experiments>
</comment>
<comment type="caution">
    <text evidence="2">Product of a dubious gene prediction.</text>
</comment>
<dbReference type="EMBL" id="AP000269">
    <property type="status" value="NOT_ANNOTATED_CDS"/>
    <property type="molecule type" value="Genomic_DNA"/>
</dbReference>
<dbReference type="EMBL" id="BC007928">
    <property type="status" value="NOT_ANNOTATED_CDS"/>
    <property type="molecule type" value="mRNA"/>
</dbReference>
<dbReference type="IntAct" id="Q96HZ7">
    <property type="interactions" value="3"/>
</dbReference>
<dbReference type="BioMuta" id="HGNC:23128"/>
<dbReference type="MassIVE" id="Q96HZ7"/>
<dbReference type="AGR" id="HGNC:23128"/>
<dbReference type="GeneCards" id="URB1-AS1"/>
<dbReference type="HGNC" id="HGNC:23128">
    <property type="gene designation" value="URB1-AS1"/>
</dbReference>
<dbReference type="neXtProt" id="NX_Q96HZ7"/>
<dbReference type="InParanoid" id="Q96HZ7"/>
<dbReference type="PAN-GO" id="Q96HZ7">
    <property type="GO annotations" value="0 GO annotations based on evolutionary models"/>
</dbReference>
<dbReference type="PhylomeDB" id="Q96HZ7"/>
<dbReference type="PathwayCommons" id="Q96HZ7"/>
<dbReference type="SignaLink" id="Q96HZ7"/>
<dbReference type="Pharos" id="Q96HZ7">
    <property type="development level" value="Tdark"/>
</dbReference>
<dbReference type="Proteomes" id="UP000005640">
    <property type="component" value="Unplaced"/>
</dbReference>
<dbReference type="RNAct" id="Q96HZ7">
    <property type="molecule type" value="protein"/>
</dbReference>